<dbReference type="EC" id="2.7.4.8"/>
<dbReference type="EMBL" id="AE017263">
    <property type="protein sequence ID" value="AAT75552.1"/>
    <property type="molecule type" value="Genomic_DNA"/>
</dbReference>
<dbReference type="RefSeq" id="WP_011183092.1">
    <property type="nucleotide sequence ID" value="NC_006055.1"/>
</dbReference>
<dbReference type="RefSeq" id="YP_053436.1">
    <property type="nucleotide sequence ID" value="NC_006055.1"/>
</dbReference>
<dbReference type="SMR" id="Q6F1S1"/>
<dbReference type="STRING" id="265311.Mfl195"/>
<dbReference type="PaxDb" id="265311-Mfl195"/>
<dbReference type="EnsemblBacteria" id="AAT75552">
    <property type="protein sequence ID" value="AAT75552"/>
    <property type="gene ID" value="Mfl195"/>
</dbReference>
<dbReference type="GeneID" id="2898173"/>
<dbReference type="KEGG" id="mfl:Mfl195"/>
<dbReference type="PATRIC" id="fig|265311.5.peg.196"/>
<dbReference type="eggNOG" id="COG0194">
    <property type="taxonomic scope" value="Bacteria"/>
</dbReference>
<dbReference type="HOGENOM" id="CLU_001715_1_0_14"/>
<dbReference type="OrthoDB" id="9808150at2"/>
<dbReference type="Proteomes" id="UP000006647">
    <property type="component" value="Chromosome"/>
</dbReference>
<dbReference type="GO" id="GO:0005829">
    <property type="term" value="C:cytosol"/>
    <property type="evidence" value="ECO:0007669"/>
    <property type="project" value="TreeGrafter"/>
</dbReference>
<dbReference type="GO" id="GO:0005524">
    <property type="term" value="F:ATP binding"/>
    <property type="evidence" value="ECO:0007669"/>
    <property type="project" value="UniProtKB-UniRule"/>
</dbReference>
<dbReference type="GO" id="GO:0004385">
    <property type="term" value="F:guanylate kinase activity"/>
    <property type="evidence" value="ECO:0007669"/>
    <property type="project" value="UniProtKB-UniRule"/>
</dbReference>
<dbReference type="CDD" id="cd00071">
    <property type="entry name" value="GMPK"/>
    <property type="match status" value="1"/>
</dbReference>
<dbReference type="FunFam" id="3.30.63.10:FF:000002">
    <property type="entry name" value="Guanylate kinase 1"/>
    <property type="match status" value="1"/>
</dbReference>
<dbReference type="Gene3D" id="3.30.63.10">
    <property type="entry name" value="Guanylate Kinase phosphate binding domain"/>
    <property type="match status" value="1"/>
</dbReference>
<dbReference type="Gene3D" id="3.40.50.300">
    <property type="entry name" value="P-loop containing nucleotide triphosphate hydrolases"/>
    <property type="match status" value="1"/>
</dbReference>
<dbReference type="HAMAP" id="MF_00328">
    <property type="entry name" value="Guanylate_kinase"/>
    <property type="match status" value="1"/>
</dbReference>
<dbReference type="InterPro" id="IPR008145">
    <property type="entry name" value="GK/Ca_channel_bsu"/>
</dbReference>
<dbReference type="InterPro" id="IPR008144">
    <property type="entry name" value="Guanylate_kin-like_dom"/>
</dbReference>
<dbReference type="InterPro" id="IPR017665">
    <property type="entry name" value="Guanylate_kinase"/>
</dbReference>
<dbReference type="InterPro" id="IPR020590">
    <property type="entry name" value="Guanylate_kinase_CS"/>
</dbReference>
<dbReference type="InterPro" id="IPR027417">
    <property type="entry name" value="P-loop_NTPase"/>
</dbReference>
<dbReference type="NCBIfam" id="TIGR03263">
    <property type="entry name" value="guanyl_kin"/>
    <property type="match status" value="1"/>
</dbReference>
<dbReference type="PANTHER" id="PTHR23117:SF13">
    <property type="entry name" value="GUANYLATE KINASE"/>
    <property type="match status" value="1"/>
</dbReference>
<dbReference type="PANTHER" id="PTHR23117">
    <property type="entry name" value="GUANYLATE KINASE-RELATED"/>
    <property type="match status" value="1"/>
</dbReference>
<dbReference type="Pfam" id="PF00625">
    <property type="entry name" value="Guanylate_kin"/>
    <property type="match status" value="1"/>
</dbReference>
<dbReference type="SMART" id="SM00072">
    <property type="entry name" value="GuKc"/>
    <property type="match status" value="1"/>
</dbReference>
<dbReference type="SUPFAM" id="SSF52540">
    <property type="entry name" value="P-loop containing nucleoside triphosphate hydrolases"/>
    <property type="match status" value="1"/>
</dbReference>
<dbReference type="PROSITE" id="PS00856">
    <property type="entry name" value="GUANYLATE_KINASE_1"/>
    <property type="match status" value="1"/>
</dbReference>
<dbReference type="PROSITE" id="PS50052">
    <property type="entry name" value="GUANYLATE_KINASE_2"/>
    <property type="match status" value="1"/>
</dbReference>
<reference key="1">
    <citation type="submission" date="2004-06" db="EMBL/GenBank/DDBJ databases">
        <authorList>
            <person name="Birren B.W."/>
            <person name="Stange-Thomann N."/>
            <person name="Hafez N."/>
            <person name="DeCaprio D."/>
            <person name="Fisher S."/>
            <person name="Butler J."/>
            <person name="Elkins T."/>
            <person name="Kodira C.D."/>
            <person name="Major J."/>
            <person name="Wang S."/>
            <person name="Nicol R."/>
            <person name="Nusbaum C."/>
        </authorList>
    </citation>
    <scope>NUCLEOTIDE SEQUENCE [LARGE SCALE GENOMIC DNA]</scope>
    <source>
        <strain>ATCC 33453 / NBRC 100688 / NCTC 11704 / L1</strain>
    </source>
</reference>
<proteinExistence type="inferred from homology"/>
<protein>
    <recommendedName>
        <fullName>Guanylate kinase</fullName>
        <ecNumber>2.7.4.8</ecNumber>
    </recommendedName>
    <alternativeName>
        <fullName>GMP kinase</fullName>
    </alternativeName>
</protein>
<sequence length="297" mass="33826">MKNKGKVIIISGPSGVGKGSVNGELLTNKDLKLEYSVSMTTRAPREGEVNGVNYFFVSKEEFANAIVNNELIEYANFVGNSYGTPRKYVEEKLNEGKNVILEIEVDGATQVLRNEENVLSIFLMPPTLNELESRIKGRATESDDKIKARLDKALLEIPLKHNYDYVVENDSVENAVSKITDILIREKCTESNEESKFKELVKIVENIVDQKYTYFINNWEANVKLLAHNKEAKKEANDFDARGELIKILSSEVYRKTLAHGDFSKINDVEYVDFKIQKLMFKINFFSIKQRSDFSGD</sequence>
<organism>
    <name type="scientific">Mesoplasma florum (strain ATCC 33453 / NBRC 100688 / NCTC 11704 / L1)</name>
    <name type="common">Acholeplasma florum</name>
    <dbReference type="NCBI Taxonomy" id="265311"/>
    <lineage>
        <taxon>Bacteria</taxon>
        <taxon>Bacillati</taxon>
        <taxon>Mycoplasmatota</taxon>
        <taxon>Mollicutes</taxon>
        <taxon>Entomoplasmatales</taxon>
        <taxon>Entomoplasmataceae</taxon>
        <taxon>Mesoplasma</taxon>
    </lineage>
</organism>
<name>KGUA_MESFL</name>
<comment type="function">
    <text evidence="1">Essential for recycling GMP and indirectly, cGMP.</text>
</comment>
<comment type="catalytic activity">
    <reaction>
        <text>GMP + ATP = GDP + ADP</text>
        <dbReference type="Rhea" id="RHEA:20780"/>
        <dbReference type="ChEBI" id="CHEBI:30616"/>
        <dbReference type="ChEBI" id="CHEBI:58115"/>
        <dbReference type="ChEBI" id="CHEBI:58189"/>
        <dbReference type="ChEBI" id="CHEBI:456216"/>
        <dbReference type="EC" id="2.7.4.8"/>
    </reaction>
</comment>
<comment type="subcellular location">
    <subcellularLocation>
        <location evidence="1">Cytoplasm</location>
    </subcellularLocation>
</comment>
<comment type="similarity">
    <text evidence="2">Belongs to the guanylate kinase family.</text>
</comment>
<feature type="chain" id="PRO_0000266346" description="Guanylate kinase">
    <location>
        <begin position="1"/>
        <end position="297"/>
    </location>
</feature>
<feature type="domain" description="Guanylate kinase-like">
    <location>
        <begin position="5"/>
        <end position="184"/>
    </location>
</feature>
<feature type="region of interest" description="Unknown">
    <location>
        <begin position="205"/>
        <end position="297"/>
    </location>
</feature>
<feature type="binding site" evidence="1">
    <location>
        <begin position="12"/>
        <end position="19"/>
    </location>
    <ligand>
        <name>ATP</name>
        <dbReference type="ChEBI" id="CHEBI:30616"/>
    </ligand>
</feature>
<keyword id="KW-0067">ATP-binding</keyword>
<keyword id="KW-0963">Cytoplasm</keyword>
<keyword id="KW-0418">Kinase</keyword>
<keyword id="KW-0547">Nucleotide-binding</keyword>
<keyword id="KW-1185">Reference proteome</keyword>
<keyword id="KW-0808">Transferase</keyword>
<accession>Q6F1S1</accession>
<evidence type="ECO:0000250" key="1"/>
<evidence type="ECO:0000305" key="2"/>
<gene>
    <name type="primary">gmk</name>
    <name type="ordered locus">Mfl195</name>
</gene>